<sequence length="516" mass="57628">MTDIHNHKILILDFGSQYTQLIARRVREVGVFCEIFPHDVAADFIKNYQAKGIILSGGPESVYDSDVKAPEIVFELGVPVLGICYGMQTMVMQHGGEVKGADQSEFGKAIINILNSTNNIFSNMEHEQLVWMSHSDKVTQTGEHFEIIASSTNAPVAAVAHKNKPFFGVQFHPETTHTENGKQIIENFVVNICGCDTLWNIENIIENDIKEIKQKVGTDKVILGLSGGVDSSVVAAILHQAIGDQLTCIFVDTGLLRLNEGDQVMQVFAEHMDINVIRINAKNRFLDALRGICDPEQKRKIIGKLFVDIFDEEAAKIENAKWLAQGTIYSDVIESAGNNQSKAHVIKSHHNVGGLPKEMKLKLLEPLRELFKDEVRKLGLGLGLPYNMLYRHPFPGPGLGVRILGEIKKEYVETLQKADAIFTEELYKHNLYHDVSQAFGVFLPVKSVGVVGDQRRYEYVIALRAVVSIDFMTATWANLPYDFLSLVSNRIVNEVKQVSRVVYDVTGKPPGTIEWE</sequence>
<proteinExistence type="inferred from homology"/>
<dbReference type="EC" id="6.3.5.2" evidence="1"/>
<dbReference type="EMBL" id="AM286280">
    <property type="protein sequence ID" value="CAL09035.1"/>
    <property type="molecule type" value="Genomic_DNA"/>
</dbReference>
<dbReference type="RefSeq" id="WP_003021114.1">
    <property type="nucleotide sequence ID" value="NC_008245.1"/>
</dbReference>
<dbReference type="SMR" id="Q14HJ0"/>
<dbReference type="KEGG" id="ftf:FTF1019c"/>
<dbReference type="HOGENOM" id="CLU_014340_0_5_6"/>
<dbReference type="UniPathway" id="UPA00189">
    <property type="reaction ID" value="UER00296"/>
</dbReference>
<dbReference type="GO" id="GO:0005829">
    <property type="term" value="C:cytosol"/>
    <property type="evidence" value="ECO:0007669"/>
    <property type="project" value="TreeGrafter"/>
</dbReference>
<dbReference type="GO" id="GO:0005524">
    <property type="term" value="F:ATP binding"/>
    <property type="evidence" value="ECO:0007669"/>
    <property type="project" value="UniProtKB-UniRule"/>
</dbReference>
<dbReference type="GO" id="GO:0003921">
    <property type="term" value="F:GMP synthase activity"/>
    <property type="evidence" value="ECO:0007669"/>
    <property type="project" value="InterPro"/>
</dbReference>
<dbReference type="CDD" id="cd01742">
    <property type="entry name" value="GATase1_GMP_Synthase"/>
    <property type="match status" value="1"/>
</dbReference>
<dbReference type="CDD" id="cd01997">
    <property type="entry name" value="GMP_synthase_C"/>
    <property type="match status" value="1"/>
</dbReference>
<dbReference type="FunFam" id="3.30.300.10:FF:000002">
    <property type="entry name" value="GMP synthase [glutamine-hydrolyzing]"/>
    <property type="match status" value="1"/>
</dbReference>
<dbReference type="FunFam" id="3.40.50.620:FF:000001">
    <property type="entry name" value="GMP synthase [glutamine-hydrolyzing]"/>
    <property type="match status" value="1"/>
</dbReference>
<dbReference type="FunFam" id="3.40.50.880:FF:000001">
    <property type="entry name" value="GMP synthase [glutamine-hydrolyzing]"/>
    <property type="match status" value="1"/>
</dbReference>
<dbReference type="Gene3D" id="3.30.300.10">
    <property type="match status" value="1"/>
</dbReference>
<dbReference type="Gene3D" id="3.40.50.880">
    <property type="match status" value="1"/>
</dbReference>
<dbReference type="Gene3D" id="3.40.50.620">
    <property type="entry name" value="HUPs"/>
    <property type="match status" value="1"/>
</dbReference>
<dbReference type="HAMAP" id="MF_00344">
    <property type="entry name" value="GMP_synthase"/>
    <property type="match status" value="1"/>
</dbReference>
<dbReference type="InterPro" id="IPR029062">
    <property type="entry name" value="Class_I_gatase-like"/>
</dbReference>
<dbReference type="InterPro" id="IPR017926">
    <property type="entry name" value="GATASE"/>
</dbReference>
<dbReference type="InterPro" id="IPR001674">
    <property type="entry name" value="GMP_synth_C"/>
</dbReference>
<dbReference type="InterPro" id="IPR004739">
    <property type="entry name" value="GMP_synth_GATase"/>
</dbReference>
<dbReference type="InterPro" id="IPR022955">
    <property type="entry name" value="GMP_synthase"/>
</dbReference>
<dbReference type="InterPro" id="IPR025777">
    <property type="entry name" value="GMPS_ATP_PPase_dom"/>
</dbReference>
<dbReference type="InterPro" id="IPR022310">
    <property type="entry name" value="NAD/GMP_synthase"/>
</dbReference>
<dbReference type="InterPro" id="IPR014729">
    <property type="entry name" value="Rossmann-like_a/b/a_fold"/>
</dbReference>
<dbReference type="NCBIfam" id="TIGR00884">
    <property type="entry name" value="guaA_Cterm"/>
    <property type="match status" value="1"/>
</dbReference>
<dbReference type="NCBIfam" id="TIGR00888">
    <property type="entry name" value="guaA_Nterm"/>
    <property type="match status" value="1"/>
</dbReference>
<dbReference type="NCBIfam" id="NF000848">
    <property type="entry name" value="PRK00074.1"/>
    <property type="match status" value="1"/>
</dbReference>
<dbReference type="PANTHER" id="PTHR11922:SF2">
    <property type="entry name" value="GMP SYNTHASE [GLUTAMINE-HYDROLYZING]"/>
    <property type="match status" value="1"/>
</dbReference>
<dbReference type="PANTHER" id="PTHR11922">
    <property type="entry name" value="GMP SYNTHASE-RELATED"/>
    <property type="match status" value="1"/>
</dbReference>
<dbReference type="Pfam" id="PF00117">
    <property type="entry name" value="GATase"/>
    <property type="match status" value="1"/>
</dbReference>
<dbReference type="Pfam" id="PF00958">
    <property type="entry name" value="GMP_synt_C"/>
    <property type="match status" value="1"/>
</dbReference>
<dbReference type="Pfam" id="PF02540">
    <property type="entry name" value="NAD_synthase"/>
    <property type="match status" value="1"/>
</dbReference>
<dbReference type="PRINTS" id="PR00097">
    <property type="entry name" value="ANTSNTHASEII"/>
</dbReference>
<dbReference type="PRINTS" id="PR00096">
    <property type="entry name" value="GATASE"/>
</dbReference>
<dbReference type="SUPFAM" id="SSF52402">
    <property type="entry name" value="Adenine nucleotide alpha hydrolases-like"/>
    <property type="match status" value="1"/>
</dbReference>
<dbReference type="SUPFAM" id="SSF52317">
    <property type="entry name" value="Class I glutamine amidotransferase-like"/>
    <property type="match status" value="1"/>
</dbReference>
<dbReference type="SUPFAM" id="SSF54810">
    <property type="entry name" value="GMP synthetase C-terminal dimerisation domain"/>
    <property type="match status" value="1"/>
</dbReference>
<dbReference type="PROSITE" id="PS51273">
    <property type="entry name" value="GATASE_TYPE_1"/>
    <property type="match status" value="1"/>
</dbReference>
<dbReference type="PROSITE" id="PS51553">
    <property type="entry name" value="GMPS_ATP_PPASE"/>
    <property type="match status" value="1"/>
</dbReference>
<feature type="chain" id="PRO_1000120301" description="GMP synthase [glutamine-hydrolyzing]">
    <location>
        <begin position="1"/>
        <end position="516"/>
    </location>
</feature>
<feature type="domain" description="Glutamine amidotransferase type-1" evidence="1">
    <location>
        <begin position="8"/>
        <end position="198"/>
    </location>
</feature>
<feature type="domain" description="GMPS ATP-PPase" evidence="1">
    <location>
        <begin position="199"/>
        <end position="391"/>
    </location>
</feature>
<feature type="active site" description="Nucleophile" evidence="1">
    <location>
        <position position="84"/>
    </location>
</feature>
<feature type="active site" evidence="1">
    <location>
        <position position="172"/>
    </location>
</feature>
<feature type="active site" evidence="1">
    <location>
        <position position="174"/>
    </location>
</feature>
<feature type="binding site" evidence="1">
    <location>
        <begin position="226"/>
        <end position="232"/>
    </location>
    <ligand>
        <name>ATP</name>
        <dbReference type="ChEBI" id="CHEBI:30616"/>
    </ligand>
</feature>
<evidence type="ECO:0000255" key="1">
    <source>
        <dbReference type="HAMAP-Rule" id="MF_00344"/>
    </source>
</evidence>
<accession>Q14HJ0</accession>
<name>GUAA_FRAT1</name>
<comment type="function">
    <text evidence="1">Catalyzes the synthesis of GMP from XMP.</text>
</comment>
<comment type="catalytic activity">
    <reaction evidence="1">
        <text>XMP + L-glutamine + ATP + H2O = GMP + L-glutamate + AMP + diphosphate + 2 H(+)</text>
        <dbReference type="Rhea" id="RHEA:11680"/>
        <dbReference type="ChEBI" id="CHEBI:15377"/>
        <dbReference type="ChEBI" id="CHEBI:15378"/>
        <dbReference type="ChEBI" id="CHEBI:29985"/>
        <dbReference type="ChEBI" id="CHEBI:30616"/>
        <dbReference type="ChEBI" id="CHEBI:33019"/>
        <dbReference type="ChEBI" id="CHEBI:57464"/>
        <dbReference type="ChEBI" id="CHEBI:58115"/>
        <dbReference type="ChEBI" id="CHEBI:58359"/>
        <dbReference type="ChEBI" id="CHEBI:456215"/>
        <dbReference type="EC" id="6.3.5.2"/>
    </reaction>
</comment>
<comment type="pathway">
    <text evidence="1">Purine metabolism; GMP biosynthesis; GMP from XMP (L-Gln route): step 1/1.</text>
</comment>
<comment type="subunit">
    <text evidence="1">Homodimer.</text>
</comment>
<organism>
    <name type="scientific">Francisella tularensis subsp. tularensis (strain FSC 198)</name>
    <dbReference type="NCBI Taxonomy" id="393115"/>
    <lineage>
        <taxon>Bacteria</taxon>
        <taxon>Pseudomonadati</taxon>
        <taxon>Pseudomonadota</taxon>
        <taxon>Gammaproteobacteria</taxon>
        <taxon>Thiotrichales</taxon>
        <taxon>Francisellaceae</taxon>
        <taxon>Francisella</taxon>
    </lineage>
</organism>
<reference key="1">
    <citation type="journal article" date="2007" name="PLoS ONE">
        <title>Genome sequencing shows that European isolates of Francisella tularensis subspecies tularensis are almost identical to US laboratory strain Schu S4.</title>
        <authorList>
            <person name="Chaudhuri R.R."/>
            <person name="Ren C.-P."/>
            <person name="Desmond L."/>
            <person name="Vincent G.A."/>
            <person name="Silman N.J."/>
            <person name="Brehm J.K."/>
            <person name="Elmore M.J."/>
            <person name="Hudson M.J."/>
            <person name="Forsman M."/>
            <person name="Isherwood K.E."/>
            <person name="Gurycova D."/>
            <person name="Minton N.P."/>
            <person name="Titball R.W."/>
            <person name="Pallen M.J."/>
            <person name="Vipond R."/>
        </authorList>
    </citation>
    <scope>NUCLEOTIDE SEQUENCE [LARGE SCALE GENOMIC DNA]</scope>
    <source>
        <strain>FSC 198</strain>
    </source>
</reference>
<gene>
    <name evidence="1" type="primary">guaA</name>
    <name type="ordered locus">FTF1019c</name>
</gene>
<protein>
    <recommendedName>
        <fullName evidence="1">GMP synthase [glutamine-hydrolyzing]</fullName>
        <ecNumber evidence="1">6.3.5.2</ecNumber>
    </recommendedName>
    <alternativeName>
        <fullName evidence="1">GMP synthetase</fullName>
    </alternativeName>
    <alternativeName>
        <fullName evidence="1">Glutamine amidotransferase</fullName>
    </alternativeName>
</protein>
<keyword id="KW-0067">ATP-binding</keyword>
<keyword id="KW-0315">Glutamine amidotransferase</keyword>
<keyword id="KW-0332">GMP biosynthesis</keyword>
<keyword id="KW-0436">Ligase</keyword>
<keyword id="KW-0547">Nucleotide-binding</keyword>
<keyword id="KW-0658">Purine biosynthesis</keyword>